<reference key="1">
    <citation type="journal article" date="2009" name="Genome Biol.">
        <title>A whole-genome assembly of the domestic cow, Bos taurus.</title>
        <authorList>
            <person name="Zimin A.V."/>
            <person name="Delcher A.L."/>
            <person name="Florea L."/>
            <person name="Kelley D.R."/>
            <person name="Schatz M.C."/>
            <person name="Puiu D."/>
            <person name="Hanrahan F."/>
            <person name="Pertea G."/>
            <person name="Van Tassell C.P."/>
            <person name="Sonstegard T.S."/>
            <person name="Marcais G."/>
            <person name="Roberts M."/>
            <person name="Subramanian P."/>
            <person name="Yorke J.A."/>
            <person name="Salzberg S.L."/>
        </authorList>
    </citation>
    <scope>NUCLEOTIDE SEQUENCE [LARGE SCALE GENOMIC DNA]</scope>
    <source>
        <strain>Hereford</strain>
    </source>
</reference>
<keyword id="KW-0968">Cytoplasmic vesicle</keyword>
<keyword id="KW-0967">Endosome</keyword>
<keyword id="KW-0449">Lipoprotein</keyword>
<keyword id="KW-0458">Lysosome</keyword>
<keyword id="KW-0472">Membrane</keyword>
<keyword id="KW-0479">Metal-binding</keyword>
<keyword id="KW-0519">Myristate</keyword>
<keyword id="KW-0597">Phosphoprotein</keyword>
<keyword id="KW-1185">Reference proteome</keyword>
<keyword id="KW-0770">Synapse</keyword>
<keyword id="KW-0808">Transferase</keyword>
<keyword id="KW-0832">Ubl conjugation</keyword>
<keyword id="KW-0833">Ubl conjugation pathway</keyword>
<keyword id="KW-0862">Zinc</keyword>
<keyword id="KW-0863">Zinc-finger</keyword>
<comment type="function">
    <text evidence="2">E3 ubiquitin-protein ligase that plays a role in different processes including cell differentiation, receptor recycling or regulation of inflammation. Mediates the ubiquitination of AKT1 and GLUL, thereby playing a role in neuron cells differentiation. Plays a role in the establishment and maintenance of neuronal transmission and plasticity. Regulates Schwann cells differentiation by mediating ubiquitination of GLUL. Promotes neurodegeneration by mediating 'Lys-48'-linked polyubiquitination and subsequent degradation of AKT1 in axons: degradation of AKT1 prevents AKT1-mediated phosphorylation of GSK3B, leading to GSK3B activation and phosphorylation of DPYSL2/CRMP2 followed by destabilization of microtubule assembly in axons. Ubiquitinates the Na(+)/K(+) ATPase alpha-1 subunit/ATP1A1 and thereby influences its endocytosis and/or degradation. Controls ligand-induced EGFR signaling via mediating receptor ubiquitination and recruitment of the ESCRT machinery. Acts as a negative feedback mechanism controlling TLR3 trafficking by mediating TLR3 'Lys-63'-linked polyubiquitination to reduce type I IFN production. Modulates inflammation by promoting caveolin-1/CAV1 ubiquitination and degradation to regulate TLR4-activated immune response.</text>
</comment>
<comment type="catalytic activity">
    <reaction evidence="2">
        <text>S-ubiquitinyl-[E2 ubiquitin-conjugating enzyme]-L-cysteine + [acceptor protein]-L-lysine = [E2 ubiquitin-conjugating enzyme]-L-cysteine + N(6)-ubiquitinyl-[acceptor protein]-L-lysine.</text>
        <dbReference type="EC" id="2.3.2.27"/>
    </reaction>
</comment>
<comment type="pathway">
    <text evidence="2">Protein modification; protein ubiquitination.</text>
</comment>
<comment type="subunit">
    <text evidence="2 3">Interacts with AKT1, GLUL and TUBB2A (By similarity). Interacts with ZNRF2. Interacts (via its RING domain) with UBE2N. Interacts (when phosphorylated) with YWHAE (By similarity).</text>
</comment>
<comment type="subcellular location">
    <subcellularLocation>
        <location evidence="1">Endosome</location>
    </subcellularLocation>
    <subcellularLocation>
        <location evidence="1">Lysosome</location>
    </subcellularLocation>
    <subcellularLocation>
        <location evidence="1">Membrane</location>
        <topology evidence="1">Peripheral membrane protein</topology>
    </subcellularLocation>
    <subcellularLocation>
        <location evidence="7">Cytoplasmic vesicle</location>
        <location evidence="7">Secretory vesicle</location>
        <location evidence="7">Synaptic vesicle membrane</location>
        <topology evidence="7">Peripheral membrane protein</topology>
    </subcellularLocation>
    <text evidence="1">Associated with synaptic vesicle membranes in neurons.</text>
</comment>
<comment type="domain">
    <text evidence="1">The RING-type zinc finger domain is required for E3 ligase activity.</text>
</comment>
<comment type="PTM">
    <text evidence="2">N-myristoylation targets ZNRF1 to intracellular membranes.</text>
</comment>
<comment type="PTM">
    <text evidence="2">Phosphorylated by SRC at Tyr-103; leading to 'Lys-63'-linked ubiquitination of TLR3, lysosomal trafficking and degradation.</text>
</comment>
<gene>
    <name type="primary">ZNRF1</name>
</gene>
<evidence type="ECO:0000250" key="1"/>
<evidence type="ECO:0000250" key="2">
    <source>
        <dbReference type="UniProtKB" id="Q8ND25"/>
    </source>
</evidence>
<evidence type="ECO:0000250" key="3">
    <source>
        <dbReference type="UniProtKB" id="Q91V17"/>
    </source>
</evidence>
<evidence type="ECO:0000255" key="4"/>
<evidence type="ECO:0000255" key="5">
    <source>
        <dbReference type="PROSITE-ProRule" id="PRU00175"/>
    </source>
</evidence>
<evidence type="ECO:0000256" key="6">
    <source>
        <dbReference type="SAM" id="MobiDB-lite"/>
    </source>
</evidence>
<evidence type="ECO:0000305" key="7"/>
<protein>
    <recommendedName>
        <fullName>E3 ubiquitin-protein ligase ZNRF1</fullName>
        <ecNumber>2.3.2.27</ecNumber>
    </recommendedName>
    <alternativeName>
        <fullName>RING-type E3 ubiquitin transferase ZNRF1</fullName>
    </alternativeName>
    <alternativeName>
        <fullName>Zinc/RING finger protein 1</fullName>
    </alternativeName>
</protein>
<feature type="initiator methionine" description="Removed" evidence="4">
    <location>
        <position position="1"/>
    </location>
</feature>
<feature type="chain" id="PRO_0000415578" description="E3 ubiquitin-protein ligase ZNRF1">
    <location>
        <begin position="2"/>
        <end position="227"/>
    </location>
</feature>
<feature type="zinc finger region" description="RING-type; atypical" evidence="5">
    <location>
        <begin position="184"/>
        <end position="225"/>
    </location>
</feature>
<feature type="region of interest" description="Disordered" evidence="6">
    <location>
        <begin position="1"/>
        <end position="38"/>
    </location>
</feature>
<feature type="region of interest" description="Required for endosomal and lysosomal localization and myristoylation" evidence="1">
    <location>
        <begin position="2"/>
        <end position="10"/>
    </location>
</feature>
<feature type="region of interest" description="Disordered" evidence="6">
    <location>
        <begin position="77"/>
        <end position="105"/>
    </location>
</feature>
<feature type="modified residue" description="Phosphoserine" evidence="2">
    <location>
        <position position="50"/>
    </location>
</feature>
<feature type="modified residue" description="Phosphoserine" evidence="2">
    <location>
        <position position="52"/>
    </location>
</feature>
<feature type="modified residue" description="Phosphoserine" evidence="2">
    <location>
        <position position="53"/>
    </location>
</feature>
<feature type="modified residue" description="Phosphotyrosine" evidence="2">
    <location>
        <position position="103"/>
    </location>
</feature>
<feature type="modified residue" description="Phosphoserine" evidence="2">
    <location>
        <position position="123"/>
    </location>
</feature>
<feature type="lipid moiety-binding region" description="N-myristoyl glycine" evidence="2">
    <location>
        <position position="2"/>
    </location>
</feature>
<sequence length="227" mass="23712">MGGKQSTAARSRGPFPGVSTDDSAVPPPGGAPHFGHYRAGGGAMGLRSRSVSSVAGMGMDPSSAGGVSFGLYTPASRGAGDAERAPGSGGSASDSTYAHGNGYQETGGGHHRDGMLYLGSRASLADALPLHIAPRWFSSHSGFKCPICSKSVASDEMEMHFIMCLSKPRLSYNDDVLTKDAGECVICLEELLQGDTIARLPCLCIYHKSCIDSWFEVNRSCPEHPAD</sequence>
<name>ZNRF1_BOVIN</name>
<accession>F1MM41</accession>
<dbReference type="EC" id="2.3.2.27"/>
<dbReference type="EMBL" id="DAAA02045987">
    <property type="status" value="NOT_ANNOTATED_CDS"/>
    <property type="molecule type" value="Genomic_DNA"/>
</dbReference>
<dbReference type="RefSeq" id="NP_001179139.1">
    <property type="nucleotide sequence ID" value="NM_001192210.1"/>
</dbReference>
<dbReference type="RefSeq" id="XP_005218391.1">
    <property type="nucleotide sequence ID" value="XM_005218334.5"/>
</dbReference>
<dbReference type="RefSeq" id="XP_005218392.1">
    <property type="nucleotide sequence ID" value="XM_005218335.5"/>
</dbReference>
<dbReference type="RefSeq" id="XP_005218393.1">
    <property type="nucleotide sequence ID" value="XM_005218336.5"/>
</dbReference>
<dbReference type="RefSeq" id="XP_005218394.1">
    <property type="nucleotide sequence ID" value="XM_005218337.4"/>
</dbReference>
<dbReference type="SMR" id="F1MM41"/>
<dbReference type="FunCoup" id="F1MM41">
    <property type="interactions" value="1027"/>
</dbReference>
<dbReference type="STRING" id="9913.ENSBTAP00000046062"/>
<dbReference type="PaxDb" id="9913-ENSBTAP00000046062"/>
<dbReference type="Ensembl" id="ENSBTAT00000049126.5">
    <property type="protein sequence ID" value="ENSBTAP00000046062.5"/>
    <property type="gene ID" value="ENSBTAG00000034689.5"/>
</dbReference>
<dbReference type="GeneID" id="509076"/>
<dbReference type="KEGG" id="bta:509076"/>
<dbReference type="CTD" id="84937"/>
<dbReference type="VEuPathDB" id="HostDB:ENSBTAG00000034689"/>
<dbReference type="VGNC" id="VGNC:37363">
    <property type="gene designation" value="ZNRF1"/>
</dbReference>
<dbReference type="eggNOG" id="KOG0801">
    <property type="taxonomic scope" value="Eukaryota"/>
</dbReference>
<dbReference type="GeneTree" id="ENSGT00940000159278"/>
<dbReference type="HOGENOM" id="CLU_062700_0_1_1"/>
<dbReference type="InParanoid" id="F1MM41"/>
<dbReference type="OMA" id="TPYAHGN"/>
<dbReference type="OrthoDB" id="10057496at2759"/>
<dbReference type="TreeFam" id="TF317681"/>
<dbReference type="Reactome" id="R-BTA-983168">
    <property type="pathway name" value="Antigen processing: Ubiquitination &amp; Proteasome degradation"/>
</dbReference>
<dbReference type="UniPathway" id="UPA00143"/>
<dbReference type="Proteomes" id="UP000009136">
    <property type="component" value="Chromosome 18"/>
</dbReference>
<dbReference type="Bgee" id="ENSBTAG00000034689">
    <property type="expression patterns" value="Expressed in thymus and 105 other cell types or tissues"/>
</dbReference>
<dbReference type="GO" id="GO:0005737">
    <property type="term" value="C:cytoplasm"/>
    <property type="evidence" value="ECO:0000318"/>
    <property type="project" value="GO_Central"/>
</dbReference>
<dbReference type="GO" id="GO:0005829">
    <property type="term" value="C:cytosol"/>
    <property type="evidence" value="ECO:0007669"/>
    <property type="project" value="Ensembl"/>
</dbReference>
<dbReference type="GO" id="GO:0005768">
    <property type="term" value="C:endosome"/>
    <property type="evidence" value="ECO:0007669"/>
    <property type="project" value="UniProtKB-SubCell"/>
</dbReference>
<dbReference type="GO" id="GO:0043231">
    <property type="term" value="C:intracellular membrane-bounded organelle"/>
    <property type="evidence" value="ECO:0000318"/>
    <property type="project" value="GO_Central"/>
</dbReference>
<dbReference type="GO" id="GO:0005764">
    <property type="term" value="C:lysosome"/>
    <property type="evidence" value="ECO:0007669"/>
    <property type="project" value="UniProtKB-SubCell"/>
</dbReference>
<dbReference type="GO" id="GO:0016020">
    <property type="term" value="C:membrane"/>
    <property type="evidence" value="ECO:0000318"/>
    <property type="project" value="GO_Central"/>
</dbReference>
<dbReference type="GO" id="GO:0030672">
    <property type="term" value="C:synaptic vesicle membrane"/>
    <property type="evidence" value="ECO:0007669"/>
    <property type="project" value="UniProtKB-SubCell"/>
</dbReference>
<dbReference type="GO" id="GO:0061630">
    <property type="term" value="F:ubiquitin protein ligase activity"/>
    <property type="evidence" value="ECO:0000318"/>
    <property type="project" value="GO_Central"/>
</dbReference>
<dbReference type="GO" id="GO:0004842">
    <property type="term" value="F:ubiquitin-protein transferase activity"/>
    <property type="evidence" value="ECO:0000250"/>
    <property type="project" value="UniProtKB"/>
</dbReference>
<dbReference type="GO" id="GO:0008270">
    <property type="term" value="F:zinc ion binding"/>
    <property type="evidence" value="ECO:0007669"/>
    <property type="project" value="UniProtKB-KW"/>
</dbReference>
<dbReference type="GO" id="GO:0160177">
    <property type="term" value="P:positive regulation of autophagosome-lysosome fusion"/>
    <property type="evidence" value="ECO:0007669"/>
    <property type="project" value="Ensembl"/>
</dbReference>
<dbReference type="GO" id="GO:0034145">
    <property type="term" value="P:positive regulation of toll-like receptor 4 signaling pathway"/>
    <property type="evidence" value="ECO:0007669"/>
    <property type="project" value="Ensembl"/>
</dbReference>
<dbReference type="GO" id="GO:0043161">
    <property type="term" value="P:proteasome-mediated ubiquitin-dependent protein catabolic process"/>
    <property type="evidence" value="ECO:0000250"/>
    <property type="project" value="UniProtKB"/>
</dbReference>
<dbReference type="GO" id="GO:0070936">
    <property type="term" value="P:protein K48-linked ubiquitination"/>
    <property type="evidence" value="ECO:0000250"/>
    <property type="project" value="UniProtKB"/>
</dbReference>
<dbReference type="CDD" id="cd16695">
    <property type="entry name" value="mRING-CH-C4HC2H_ZNRF2"/>
    <property type="match status" value="1"/>
</dbReference>
<dbReference type="FunFam" id="3.30.40.10:FF:000235">
    <property type="entry name" value="E3 ubiquitin-protein ligase ZNRF1"/>
    <property type="match status" value="1"/>
</dbReference>
<dbReference type="Gene3D" id="3.30.40.10">
    <property type="entry name" value="Zinc/RING finger domain, C3HC4 (zinc finger)"/>
    <property type="match status" value="1"/>
</dbReference>
<dbReference type="InterPro" id="IPR001841">
    <property type="entry name" value="Znf_RING"/>
</dbReference>
<dbReference type="InterPro" id="IPR013083">
    <property type="entry name" value="Znf_RING/FYVE/PHD"/>
</dbReference>
<dbReference type="InterPro" id="IPR051878">
    <property type="entry name" value="ZNRF_ubiq-protein_ligase"/>
</dbReference>
<dbReference type="PANTHER" id="PTHR46661:SF2">
    <property type="entry name" value="E3 UBIQUITIN-PROTEIN LIGASE ZNRF1"/>
    <property type="match status" value="1"/>
</dbReference>
<dbReference type="PANTHER" id="PTHR46661">
    <property type="entry name" value="E3 UBIQUITIN-PROTEIN LIGASE ZNRF1-LIKE PROTEIN"/>
    <property type="match status" value="1"/>
</dbReference>
<dbReference type="Pfam" id="PF13639">
    <property type="entry name" value="zf-RING_2"/>
    <property type="match status" value="1"/>
</dbReference>
<dbReference type="SMART" id="SM00184">
    <property type="entry name" value="RING"/>
    <property type="match status" value="1"/>
</dbReference>
<dbReference type="SUPFAM" id="SSF57850">
    <property type="entry name" value="RING/U-box"/>
    <property type="match status" value="1"/>
</dbReference>
<dbReference type="PROSITE" id="PS50089">
    <property type="entry name" value="ZF_RING_2"/>
    <property type="match status" value="1"/>
</dbReference>
<proteinExistence type="inferred from homology"/>
<organism>
    <name type="scientific">Bos taurus</name>
    <name type="common">Bovine</name>
    <dbReference type="NCBI Taxonomy" id="9913"/>
    <lineage>
        <taxon>Eukaryota</taxon>
        <taxon>Metazoa</taxon>
        <taxon>Chordata</taxon>
        <taxon>Craniata</taxon>
        <taxon>Vertebrata</taxon>
        <taxon>Euteleostomi</taxon>
        <taxon>Mammalia</taxon>
        <taxon>Eutheria</taxon>
        <taxon>Laurasiatheria</taxon>
        <taxon>Artiodactyla</taxon>
        <taxon>Ruminantia</taxon>
        <taxon>Pecora</taxon>
        <taxon>Bovidae</taxon>
        <taxon>Bovinae</taxon>
        <taxon>Bos</taxon>
    </lineage>
</organism>